<accession>A6GZF2</accession>
<comment type="function">
    <text evidence="1">Binds directly to 16S ribosomal RNA.</text>
</comment>
<comment type="similarity">
    <text evidence="1">Belongs to the bacterial ribosomal protein bS20 family.</text>
</comment>
<keyword id="KW-1185">Reference proteome</keyword>
<keyword id="KW-0687">Ribonucleoprotein</keyword>
<keyword id="KW-0689">Ribosomal protein</keyword>
<keyword id="KW-0694">RNA-binding</keyword>
<keyword id="KW-0699">rRNA-binding</keyword>
<reference key="1">
    <citation type="journal article" date="2007" name="Nat. Biotechnol.">
        <title>Complete genome sequence of the fish pathogen Flavobacterium psychrophilum.</title>
        <authorList>
            <person name="Duchaud E."/>
            <person name="Boussaha M."/>
            <person name="Loux V."/>
            <person name="Bernardet J.-F."/>
            <person name="Michel C."/>
            <person name="Kerouault B."/>
            <person name="Mondot S."/>
            <person name="Nicolas P."/>
            <person name="Bossy R."/>
            <person name="Caron C."/>
            <person name="Bessieres P."/>
            <person name="Gibrat J.-F."/>
            <person name="Claverol S."/>
            <person name="Dumetz F."/>
            <person name="Le Henaff M."/>
            <person name="Benmansour A."/>
        </authorList>
    </citation>
    <scope>NUCLEOTIDE SEQUENCE [LARGE SCALE GENOMIC DNA]</scope>
    <source>
        <strain>ATCC 49511 / DSM 21280 / CIP 103535 / JIP02/86</strain>
    </source>
</reference>
<protein>
    <recommendedName>
        <fullName evidence="1">Small ribosomal subunit protein bS20</fullName>
    </recommendedName>
    <alternativeName>
        <fullName evidence="2">30S ribosomal protein S20</fullName>
    </alternativeName>
</protein>
<evidence type="ECO:0000255" key="1">
    <source>
        <dbReference type="HAMAP-Rule" id="MF_00500"/>
    </source>
</evidence>
<evidence type="ECO:0000305" key="2"/>
<sequence length="83" mass="9472">MANHKSALKRIRSNEKKRVLNRYQHKTTRNAIKALRIATDKTEATAKLSNVISMIDKLAKKNIIHDNKASNLKSKLTRFVSSL</sequence>
<dbReference type="EMBL" id="AM398681">
    <property type="protein sequence ID" value="CAL43475.1"/>
    <property type="molecule type" value="Genomic_DNA"/>
</dbReference>
<dbReference type="RefSeq" id="WP_011963520.1">
    <property type="nucleotide sequence ID" value="NC_009613.3"/>
</dbReference>
<dbReference type="RefSeq" id="YP_001296284.1">
    <property type="nucleotide sequence ID" value="NC_009613.3"/>
</dbReference>
<dbReference type="SMR" id="A6GZF2"/>
<dbReference type="STRING" id="402612.FP1397"/>
<dbReference type="EnsemblBacteria" id="CAL43475">
    <property type="protein sequence ID" value="CAL43475"/>
    <property type="gene ID" value="FP1397"/>
</dbReference>
<dbReference type="GeneID" id="66552853"/>
<dbReference type="KEGG" id="fps:FP1397"/>
<dbReference type="PATRIC" id="fig|402612.5.peg.1410"/>
<dbReference type="eggNOG" id="COG0268">
    <property type="taxonomic scope" value="Bacteria"/>
</dbReference>
<dbReference type="HOGENOM" id="CLU_160655_3_2_10"/>
<dbReference type="OrthoDB" id="9808392at2"/>
<dbReference type="Proteomes" id="UP000006394">
    <property type="component" value="Chromosome"/>
</dbReference>
<dbReference type="GO" id="GO:0005829">
    <property type="term" value="C:cytosol"/>
    <property type="evidence" value="ECO:0007669"/>
    <property type="project" value="TreeGrafter"/>
</dbReference>
<dbReference type="GO" id="GO:0015935">
    <property type="term" value="C:small ribosomal subunit"/>
    <property type="evidence" value="ECO:0007669"/>
    <property type="project" value="TreeGrafter"/>
</dbReference>
<dbReference type="GO" id="GO:0070181">
    <property type="term" value="F:small ribosomal subunit rRNA binding"/>
    <property type="evidence" value="ECO:0007669"/>
    <property type="project" value="TreeGrafter"/>
</dbReference>
<dbReference type="GO" id="GO:0003735">
    <property type="term" value="F:structural constituent of ribosome"/>
    <property type="evidence" value="ECO:0007669"/>
    <property type="project" value="InterPro"/>
</dbReference>
<dbReference type="GO" id="GO:0006412">
    <property type="term" value="P:translation"/>
    <property type="evidence" value="ECO:0007669"/>
    <property type="project" value="UniProtKB-UniRule"/>
</dbReference>
<dbReference type="Gene3D" id="1.20.58.110">
    <property type="entry name" value="Ribosomal protein S20"/>
    <property type="match status" value="1"/>
</dbReference>
<dbReference type="HAMAP" id="MF_00500">
    <property type="entry name" value="Ribosomal_bS20"/>
    <property type="match status" value="1"/>
</dbReference>
<dbReference type="InterPro" id="IPR002583">
    <property type="entry name" value="Ribosomal_bS20"/>
</dbReference>
<dbReference type="InterPro" id="IPR036510">
    <property type="entry name" value="Ribosomal_bS20_sf"/>
</dbReference>
<dbReference type="NCBIfam" id="TIGR00029">
    <property type="entry name" value="S20"/>
    <property type="match status" value="1"/>
</dbReference>
<dbReference type="PANTHER" id="PTHR33398">
    <property type="entry name" value="30S RIBOSOMAL PROTEIN S20"/>
    <property type="match status" value="1"/>
</dbReference>
<dbReference type="PANTHER" id="PTHR33398:SF1">
    <property type="entry name" value="SMALL RIBOSOMAL SUBUNIT PROTEIN BS20C"/>
    <property type="match status" value="1"/>
</dbReference>
<dbReference type="Pfam" id="PF01649">
    <property type="entry name" value="Ribosomal_S20p"/>
    <property type="match status" value="1"/>
</dbReference>
<dbReference type="SUPFAM" id="SSF46992">
    <property type="entry name" value="Ribosomal protein S20"/>
    <property type="match status" value="1"/>
</dbReference>
<proteinExistence type="inferred from homology"/>
<organism>
    <name type="scientific">Flavobacterium psychrophilum (strain ATCC 49511 / DSM 21280 / CIP 103535 / JIP02/86)</name>
    <dbReference type="NCBI Taxonomy" id="402612"/>
    <lineage>
        <taxon>Bacteria</taxon>
        <taxon>Pseudomonadati</taxon>
        <taxon>Bacteroidota</taxon>
        <taxon>Flavobacteriia</taxon>
        <taxon>Flavobacteriales</taxon>
        <taxon>Flavobacteriaceae</taxon>
        <taxon>Flavobacterium</taxon>
    </lineage>
</organism>
<gene>
    <name evidence="1" type="primary">rpsT</name>
    <name type="ordered locus">FP1397</name>
</gene>
<feature type="chain" id="PRO_1000014580" description="Small ribosomal subunit protein bS20">
    <location>
        <begin position="1"/>
        <end position="83"/>
    </location>
</feature>
<name>RS20_FLAPJ</name>